<organism>
    <name type="scientific">Ehrlichia canis (strain Jake)</name>
    <dbReference type="NCBI Taxonomy" id="269484"/>
    <lineage>
        <taxon>Bacteria</taxon>
        <taxon>Pseudomonadati</taxon>
        <taxon>Pseudomonadota</taxon>
        <taxon>Alphaproteobacteria</taxon>
        <taxon>Rickettsiales</taxon>
        <taxon>Anaplasmataceae</taxon>
        <taxon>Ehrlichia</taxon>
    </lineage>
</organism>
<proteinExistence type="inferred from homology"/>
<reference key="1">
    <citation type="journal article" date="2006" name="J. Bacteriol.">
        <title>The genome of the obligately intracellular bacterium Ehrlichia canis reveals themes of complex membrane structure and immune evasion strategies.</title>
        <authorList>
            <person name="Mavromatis K."/>
            <person name="Doyle C.K."/>
            <person name="Lykidis A."/>
            <person name="Ivanova N."/>
            <person name="Francino M.P."/>
            <person name="Chain P."/>
            <person name="Shin M."/>
            <person name="Malfatti S."/>
            <person name="Larimer F."/>
            <person name="Copeland A."/>
            <person name="Detter J.C."/>
            <person name="Land M."/>
            <person name="Richardson P.M."/>
            <person name="Yu X.J."/>
            <person name="Walker D.H."/>
            <person name="McBride J.W."/>
            <person name="Kyrpides N.C."/>
        </authorList>
    </citation>
    <scope>NUCLEOTIDE SEQUENCE [LARGE SCALE GENOMIC DNA]</scope>
    <source>
        <strain>Jake</strain>
    </source>
</reference>
<evidence type="ECO:0000255" key="1">
    <source>
        <dbReference type="HAMAP-Rule" id="MF_01382"/>
    </source>
</evidence>
<keyword id="KW-0067">ATP-binding</keyword>
<keyword id="KW-0997">Cell inner membrane</keyword>
<keyword id="KW-1003">Cell membrane</keyword>
<keyword id="KW-0963">Cytoplasm</keyword>
<keyword id="KW-0472">Membrane</keyword>
<keyword id="KW-0479">Metal-binding</keyword>
<keyword id="KW-0547">Nucleotide-binding</keyword>
<keyword id="KW-0653">Protein transport</keyword>
<keyword id="KW-1278">Translocase</keyword>
<keyword id="KW-0811">Translocation</keyword>
<keyword id="KW-0813">Transport</keyword>
<keyword id="KW-0862">Zinc</keyword>
<gene>
    <name evidence="1" type="primary">secA</name>
    <name type="ordered locus">Ecaj_0921</name>
</gene>
<name>SECA_EHRCJ</name>
<comment type="function">
    <text evidence="1">Part of the Sec protein translocase complex. Interacts with the SecYEG preprotein conducting channel. Has a central role in coupling the hydrolysis of ATP to the transfer of proteins into and across the cell membrane, serving both as a receptor for the preprotein-SecB complex and as an ATP-driven molecular motor driving the stepwise translocation of polypeptide chains across the membrane.</text>
</comment>
<comment type="catalytic activity">
    <reaction evidence="1">
        <text>ATP + H2O + cellular proteinSide 1 = ADP + phosphate + cellular proteinSide 2.</text>
        <dbReference type="EC" id="7.4.2.8"/>
    </reaction>
</comment>
<comment type="cofactor">
    <cofactor evidence="1">
        <name>Zn(2+)</name>
        <dbReference type="ChEBI" id="CHEBI:29105"/>
    </cofactor>
    <text evidence="1">May bind 1 zinc ion per subunit.</text>
</comment>
<comment type="subunit">
    <text evidence="1">Monomer and homodimer. Part of the essential Sec protein translocation apparatus which comprises SecA, SecYEG and auxiliary proteins SecDF-YajC and YidC.</text>
</comment>
<comment type="subcellular location">
    <subcellularLocation>
        <location evidence="1">Cell inner membrane</location>
        <topology evidence="1">Peripheral membrane protein</topology>
        <orientation evidence="1">Cytoplasmic side</orientation>
    </subcellularLocation>
    <subcellularLocation>
        <location evidence="1">Cytoplasm</location>
    </subcellularLocation>
    <text evidence="1">Distribution is 50-50.</text>
</comment>
<comment type="similarity">
    <text evidence="1">Belongs to the SecA family.</text>
</comment>
<feature type="chain" id="PRO_0000320795" description="Protein translocase subunit SecA">
    <location>
        <begin position="1"/>
        <end position="862"/>
    </location>
</feature>
<feature type="binding site" evidence="1">
    <location>
        <position position="86"/>
    </location>
    <ligand>
        <name>ATP</name>
        <dbReference type="ChEBI" id="CHEBI:30616"/>
    </ligand>
</feature>
<feature type="binding site" evidence="1">
    <location>
        <begin position="104"/>
        <end position="108"/>
    </location>
    <ligand>
        <name>ATP</name>
        <dbReference type="ChEBI" id="CHEBI:30616"/>
    </ligand>
</feature>
<feature type="binding site" evidence="1">
    <location>
        <position position="499"/>
    </location>
    <ligand>
        <name>ATP</name>
        <dbReference type="ChEBI" id="CHEBI:30616"/>
    </ligand>
</feature>
<feature type="binding site" evidence="1">
    <location>
        <position position="848"/>
    </location>
    <ligand>
        <name>Zn(2+)</name>
        <dbReference type="ChEBI" id="CHEBI:29105"/>
    </ligand>
</feature>
<feature type="binding site" evidence="1">
    <location>
        <position position="850"/>
    </location>
    <ligand>
        <name>Zn(2+)</name>
        <dbReference type="ChEBI" id="CHEBI:29105"/>
    </ligand>
</feature>
<feature type="binding site" evidence="1">
    <location>
        <position position="859"/>
    </location>
    <ligand>
        <name>Zn(2+)</name>
        <dbReference type="ChEBI" id="CHEBI:29105"/>
    </ligand>
</feature>
<feature type="binding site" evidence="1">
    <location>
        <position position="860"/>
    </location>
    <ligand>
        <name>Zn(2+)</name>
        <dbReference type="ChEBI" id="CHEBI:29105"/>
    </ligand>
</feature>
<accession>Q3YQQ3</accession>
<sequence length="862" mass="98923">MLSIAHKIFGSANSRIIKSFYKVVQHINAIEHEFQLLSNEALKNKTIEFKEELKNGKTLDDILVPAFAVVREASKRVLNMRHFDVQLIGGMVLHKGMISEMKTGEGKTLVATLAAYLNALEGKGVHIVTVNDYLAKRDAEWMGELYDALGITVGCILTDTNDLERKNAYQCDILYSTNNNLGFDYLRDNMKFSRSEMVQRGFNYAIVDEVDSILIDEARTPLIISGQVDQDIKMYKKIDNLIYELVEEDYELEEKSKNIFLTEAGTTKIENLLTKHNLIPSNTSLYDIDNIIIMHYIIQALRAHKIFALDKDYIIKNGNIVIIDEFTGRMMDGRRYSDGLHQALEAKEKLNINSENQTLASTTFQNYFRMYTKLSGMTGTAATESEEFLGIYNLQVVQIPTNIPVQRIDLNDDIYCTEEEKFSAVIKFISECHQKLQPVLVGTVSIEKSEMLSKLLTQNKLKHSVLNARYHEQEAYIIAQAGIPGTITIATNMAGRGTDIQLGGNLKMLAKTALANTTDKEAIEIKYKQLSEKVKKDKEIAIQAGGLCVIGTERHESRRIDNQLRGRSGRQGDPGLSKFFLSLEDDLLRIFGSDKIKGVLKKLGMKKDEAIQHTWISRSIEKAQHKVESRNYDIRKSLLKFDNVINEQRKVVFDQRNRILDNDSYDISIIYRDLNSEIVNSIIHDKYYNLDDETYKILSSEFTRIYALTLDYSIISELESKEKVIEYLNKIVDEHFTQKIEEFKSRDQKLWDYAVKKVMIMSLDYLWRDHLAALDSLKCGINLRSIAQKDPLNEFKAEAFSMLENMMNKFYELITQRLSHLRFDIELSETQIPEYNINHTKISRNEKCPCGSGKKFKHCHGM</sequence>
<protein>
    <recommendedName>
        <fullName evidence="1">Protein translocase subunit SecA</fullName>
        <ecNumber evidence="1">7.4.2.8</ecNumber>
    </recommendedName>
</protein>
<dbReference type="EC" id="7.4.2.8" evidence="1"/>
<dbReference type="EMBL" id="CP000107">
    <property type="protein sequence ID" value="AAZ68952.1"/>
    <property type="molecule type" value="Genomic_DNA"/>
</dbReference>
<dbReference type="RefSeq" id="WP_011305025.1">
    <property type="nucleotide sequence ID" value="NC_007354.1"/>
</dbReference>
<dbReference type="SMR" id="Q3YQQ3"/>
<dbReference type="FunCoup" id="Q3YQQ3">
    <property type="interactions" value="327"/>
</dbReference>
<dbReference type="STRING" id="269484.Ecaj_0921"/>
<dbReference type="KEGG" id="ecn:Ecaj_0921"/>
<dbReference type="eggNOG" id="COG0653">
    <property type="taxonomic scope" value="Bacteria"/>
</dbReference>
<dbReference type="HOGENOM" id="CLU_005314_3_0_5"/>
<dbReference type="InParanoid" id="Q3YQQ3"/>
<dbReference type="Proteomes" id="UP000000435">
    <property type="component" value="Chromosome"/>
</dbReference>
<dbReference type="GO" id="GO:0031522">
    <property type="term" value="C:cell envelope Sec protein transport complex"/>
    <property type="evidence" value="ECO:0007669"/>
    <property type="project" value="TreeGrafter"/>
</dbReference>
<dbReference type="GO" id="GO:0005829">
    <property type="term" value="C:cytosol"/>
    <property type="evidence" value="ECO:0007669"/>
    <property type="project" value="TreeGrafter"/>
</dbReference>
<dbReference type="GO" id="GO:0005886">
    <property type="term" value="C:plasma membrane"/>
    <property type="evidence" value="ECO:0007669"/>
    <property type="project" value="UniProtKB-SubCell"/>
</dbReference>
<dbReference type="GO" id="GO:0005524">
    <property type="term" value="F:ATP binding"/>
    <property type="evidence" value="ECO:0007669"/>
    <property type="project" value="UniProtKB-UniRule"/>
</dbReference>
<dbReference type="GO" id="GO:0046872">
    <property type="term" value="F:metal ion binding"/>
    <property type="evidence" value="ECO:0007669"/>
    <property type="project" value="UniProtKB-KW"/>
</dbReference>
<dbReference type="GO" id="GO:0008564">
    <property type="term" value="F:protein-exporting ATPase activity"/>
    <property type="evidence" value="ECO:0007669"/>
    <property type="project" value="UniProtKB-EC"/>
</dbReference>
<dbReference type="GO" id="GO:0065002">
    <property type="term" value="P:intracellular protein transmembrane transport"/>
    <property type="evidence" value="ECO:0007669"/>
    <property type="project" value="UniProtKB-UniRule"/>
</dbReference>
<dbReference type="GO" id="GO:0017038">
    <property type="term" value="P:protein import"/>
    <property type="evidence" value="ECO:0007669"/>
    <property type="project" value="InterPro"/>
</dbReference>
<dbReference type="GO" id="GO:0006605">
    <property type="term" value="P:protein targeting"/>
    <property type="evidence" value="ECO:0007669"/>
    <property type="project" value="UniProtKB-UniRule"/>
</dbReference>
<dbReference type="GO" id="GO:0043952">
    <property type="term" value="P:protein transport by the Sec complex"/>
    <property type="evidence" value="ECO:0007669"/>
    <property type="project" value="TreeGrafter"/>
</dbReference>
<dbReference type="CDD" id="cd17928">
    <property type="entry name" value="DEXDc_SecA"/>
    <property type="match status" value="1"/>
</dbReference>
<dbReference type="CDD" id="cd18803">
    <property type="entry name" value="SF2_C_secA"/>
    <property type="match status" value="1"/>
</dbReference>
<dbReference type="FunFam" id="3.40.50.300:FF:000113">
    <property type="entry name" value="Preprotein translocase subunit SecA"/>
    <property type="match status" value="1"/>
</dbReference>
<dbReference type="FunFam" id="3.90.1440.10:FF:000001">
    <property type="entry name" value="Preprotein translocase subunit SecA"/>
    <property type="match status" value="1"/>
</dbReference>
<dbReference type="FunFam" id="3.40.50.300:FF:000334">
    <property type="entry name" value="Protein translocase subunit SecA"/>
    <property type="match status" value="1"/>
</dbReference>
<dbReference type="Gene3D" id="1.10.3060.10">
    <property type="entry name" value="Helical scaffold and wing domains of SecA"/>
    <property type="match status" value="1"/>
</dbReference>
<dbReference type="Gene3D" id="3.40.50.300">
    <property type="entry name" value="P-loop containing nucleotide triphosphate hydrolases"/>
    <property type="match status" value="2"/>
</dbReference>
<dbReference type="Gene3D" id="3.90.1440.10">
    <property type="entry name" value="SecA, preprotein cross-linking domain"/>
    <property type="match status" value="1"/>
</dbReference>
<dbReference type="HAMAP" id="MF_01382">
    <property type="entry name" value="SecA"/>
    <property type="match status" value="1"/>
</dbReference>
<dbReference type="InterPro" id="IPR014001">
    <property type="entry name" value="Helicase_ATP-bd"/>
</dbReference>
<dbReference type="InterPro" id="IPR001650">
    <property type="entry name" value="Helicase_C-like"/>
</dbReference>
<dbReference type="InterPro" id="IPR027417">
    <property type="entry name" value="P-loop_NTPase"/>
</dbReference>
<dbReference type="InterPro" id="IPR004027">
    <property type="entry name" value="SEC_C_motif"/>
</dbReference>
<dbReference type="InterPro" id="IPR000185">
    <property type="entry name" value="SecA"/>
</dbReference>
<dbReference type="InterPro" id="IPR020937">
    <property type="entry name" value="SecA_CS"/>
</dbReference>
<dbReference type="InterPro" id="IPR011115">
    <property type="entry name" value="SecA_DEAD"/>
</dbReference>
<dbReference type="InterPro" id="IPR014018">
    <property type="entry name" value="SecA_motor_DEAD"/>
</dbReference>
<dbReference type="InterPro" id="IPR011130">
    <property type="entry name" value="SecA_preprotein_X-link_dom"/>
</dbReference>
<dbReference type="InterPro" id="IPR044722">
    <property type="entry name" value="SecA_SF2_C"/>
</dbReference>
<dbReference type="InterPro" id="IPR011116">
    <property type="entry name" value="SecA_Wing/Scaffold"/>
</dbReference>
<dbReference type="InterPro" id="IPR036266">
    <property type="entry name" value="SecA_Wing/Scaffold_sf"/>
</dbReference>
<dbReference type="InterPro" id="IPR036670">
    <property type="entry name" value="SecA_X-link_sf"/>
</dbReference>
<dbReference type="NCBIfam" id="NF009538">
    <property type="entry name" value="PRK12904.1"/>
    <property type="match status" value="1"/>
</dbReference>
<dbReference type="NCBIfam" id="TIGR00963">
    <property type="entry name" value="secA"/>
    <property type="match status" value="1"/>
</dbReference>
<dbReference type="PANTHER" id="PTHR30612:SF0">
    <property type="entry name" value="CHLOROPLAST PROTEIN-TRANSPORTING ATPASE"/>
    <property type="match status" value="1"/>
</dbReference>
<dbReference type="PANTHER" id="PTHR30612">
    <property type="entry name" value="SECA INNER MEMBRANE COMPONENT OF SEC PROTEIN SECRETION SYSTEM"/>
    <property type="match status" value="1"/>
</dbReference>
<dbReference type="Pfam" id="PF21090">
    <property type="entry name" value="P-loop_SecA"/>
    <property type="match status" value="1"/>
</dbReference>
<dbReference type="Pfam" id="PF02810">
    <property type="entry name" value="SEC-C"/>
    <property type="match status" value="1"/>
</dbReference>
<dbReference type="Pfam" id="PF07517">
    <property type="entry name" value="SecA_DEAD"/>
    <property type="match status" value="1"/>
</dbReference>
<dbReference type="Pfam" id="PF01043">
    <property type="entry name" value="SecA_PP_bind"/>
    <property type="match status" value="1"/>
</dbReference>
<dbReference type="Pfam" id="PF07516">
    <property type="entry name" value="SecA_SW"/>
    <property type="match status" value="1"/>
</dbReference>
<dbReference type="PRINTS" id="PR00906">
    <property type="entry name" value="SECA"/>
</dbReference>
<dbReference type="SMART" id="SM00957">
    <property type="entry name" value="SecA_DEAD"/>
    <property type="match status" value="1"/>
</dbReference>
<dbReference type="SMART" id="SM00958">
    <property type="entry name" value="SecA_PP_bind"/>
    <property type="match status" value="1"/>
</dbReference>
<dbReference type="SUPFAM" id="SSF81886">
    <property type="entry name" value="Helical scaffold and wing domains of SecA"/>
    <property type="match status" value="1"/>
</dbReference>
<dbReference type="SUPFAM" id="SSF52540">
    <property type="entry name" value="P-loop containing nucleoside triphosphate hydrolases"/>
    <property type="match status" value="2"/>
</dbReference>
<dbReference type="SUPFAM" id="SSF81767">
    <property type="entry name" value="Pre-protein crosslinking domain of SecA"/>
    <property type="match status" value="1"/>
</dbReference>
<dbReference type="PROSITE" id="PS01312">
    <property type="entry name" value="SECA"/>
    <property type="match status" value="1"/>
</dbReference>
<dbReference type="PROSITE" id="PS51196">
    <property type="entry name" value="SECA_MOTOR_DEAD"/>
    <property type="match status" value="1"/>
</dbReference>